<keyword id="KW-0046">Antibiotic resistance</keyword>
<keyword id="KW-1003">Cell membrane</keyword>
<keyword id="KW-0133">Cell shape</keyword>
<keyword id="KW-0961">Cell wall biogenesis/degradation</keyword>
<keyword id="KW-0378">Hydrolase</keyword>
<keyword id="KW-0472">Membrane</keyword>
<keyword id="KW-0573">Peptidoglycan synthesis</keyword>
<keyword id="KW-1185">Reference proteome</keyword>
<keyword id="KW-0812">Transmembrane</keyword>
<keyword id="KW-1133">Transmembrane helix</keyword>
<evidence type="ECO:0000255" key="1">
    <source>
        <dbReference type="HAMAP-Rule" id="MF_01006"/>
    </source>
</evidence>
<dbReference type="EC" id="3.6.1.27" evidence="1"/>
<dbReference type="EMBL" id="AE016826">
    <property type="protein sequence ID" value="AAO26797.1"/>
    <property type="molecule type" value="Genomic_DNA"/>
</dbReference>
<dbReference type="SMR" id="P59523"/>
<dbReference type="STRING" id="224915.bbp_058"/>
<dbReference type="KEGG" id="bab:bbp_058"/>
<dbReference type="eggNOG" id="COG1968">
    <property type="taxonomic scope" value="Bacteria"/>
</dbReference>
<dbReference type="HOGENOM" id="CLU_060296_2_0_6"/>
<dbReference type="OrthoDB" id="9808289at2"/>
<dbReference type="Proteomes" id="UP000000601">
    <property type="component" value="Chromosome"/>
</dbReference>
<dbReference type="GO" id="GO:0005886">
    <property type="term" value="C:plasma membrane"/>
    <property type="evidence" value="ECO:0007669"/>
    <property type="project" value="UniProtKB-SubCell"/>
</dbReference>
<dbReference type="GO" id="GO:0050380">
    <property type="term" value="F:undecaprenyl-diphosphatase activity"/>
    <property type="evidence" value="ECO:0007669"/>
    <property type="project" value="UniProtKB-UniRule"/>
</dbReference>
<dbReference type="GO" id="GO:0071555">
    <property type="term" value="P:cell wall organization"/>
    <property type="evidence" value="ECO:0007669"/>
    <property type="project" value="UniProtKB-KW"/>
</dbReference>
<dbReference type="GO" id="GO:0009252">
    <property type="term" value="P:peptidoglycan biosynthetic process"/>
    <property type="evidence" value="ECO:0007669"/>
    <property type="project" value="UniProtKB-KW"/>
</dbReference>
<dbReference type="GO" id="GO:0008360">
    <property type="term" value="P:regulation of cell shape"/>
    <property type="evidence" value="ECO:0007669"/>
    <property type="project" value="UniProtKB-KW"/>
</dbReference>
<dbReference type="GO" id="GO:0046677">
    <property type="term" value="P:response to antibiotic"/>
    <property type="evidence" value="ECO:0007669"/>
    <property type="project" value="UniProtKB-UniRule"/>
</dbReference>
<dbReference type="HAMAP" id="MF_01006">
    <property type="entry name" value="Undec_diphosphatase"/>
    <property type="match status" value="1"/>
</dbReference>
<dbReference type="InterPro" id="IPR003824">
    <property type="entry name" value="UppP"/>
</dbReference>
<dbReference type="PANTHER" id="PTHR30622">
    <property type="entry name" value="UNDECAPRENYL-DIPHOSPHATASE"/>
    <property type="match status" value="1"/>
</dbReference>
<dbReference type="PANTHER" id="PTHR30622:SF3">
    <property type="entry name" value="UNDECAPRENYL-DIPHOSPHATASE"/>
    <property type="match status" value="1"/>
</dbReference>
<dbReference type="Pfam" id="PF02673">
    <property type="entry name" value="BacA"/>
    <property type="match status" value="1"/>
</dbReference>
<name>UPPP_BUCBP</name>
<proteinExistence type="inferred from homology"/>
<gene>
    <name evidence="1" type="primary">uppP</name>
    <name type="synonym">bacA</name>
    <name type="synonym">upk</name>
    <name type="ordered locus">bbp_058</name>
</gene>
<accession>P59523</accession>
<feature type="chain" id="PRO_0000151124" description="Undecaprenyl-diphosphatase">
    <location>
        <begin position="1"/>
        <end position="268"/>
    </location>
</feature>
<feature type="transmembrane region" description="Helical" evidence="1">
    <location>
        <begin position="7"/>
        <end position="27"/>
    </location>
</feature>
<feature type="transmembrane region" description="Helical" evidence="1">
    <location>
        <begin position="87"/>
        <end position="107"/>
    </location>
</feature>
<feature type="transmembrane region" description="Helical" evidence="1">
    <location>
        <begin position="116"/>
        <end position="136"/>
    </location>
</feature>
<feature type="transmembrane region" description="Helical" evidence="1">
    <location>
        <begin position="146"/>
        <end position="166"/>
    </location>
</feature>
<feature type="transmembrane region" description="Helical" evidence="1">
    <location>
        <begin position="187"/>
        <end position="207"/>
    </location>
</feature>
<feature type="transmembrane region" description="Helical" evidence="1">
    <location>
        <begin position="210"/>
        <end position="230"/>
    </location>
</feature>
<feature type="transmembrane region" description="Helical" evidence="1">
    <location>
        <begin position="247"/>
        <end position="267"/>
    </location>
</feature>
<reference key="1">
    <citation type="journal article" date="2003" name="Proc. Natl. Acad. Sci. U.S.A.">
        <title>Reductive genome evolution in Buchnera aphidicola.</title>
        <authorList>
            <person name="van Ham R.C.H.J."/>
            <person name="Kamerbeek J."/>
            <person name="Palacios C."/>
            <person name="Rausell C."/>
            <person name="Abascal F."/>
            <person name="Bastolla U."/>
            <person name="Fernandez J.M."/>
            <person name="Jimenez L."/>
            <person name="Postigo M."/>
            <person name="Silva F.J."/>
            <person name="Tamames J."/>
            <person name="Viguera E."/>
            <person name="Latorre A."/>
            <person name="Valencia A."/>
            <person name="Moran F."/>
            <person name="Moya A."/>
        </authorList>
    </citation>
    <scope>NUCLEOTIDE SEQUENCE [LARGE SCALE GENOMIC DNA]</scope>
    <source>
        <strain>Bp</strain>
    </source>
</reference>
<comment type="function">
    <text evidence="1">Catalyzes the dephosphorylation of undecaprenyl diphosphate (UPP). Confers resistance to bacitracin.</text>
</comment>
<comment type="catalytic activity">
    <reaction evidence="1">
        <text>di-trans,octa-cis-undecaprenyl diphosphate + H2O = di-trans,octa-cis-undecaprenyl phosphate + phosphate + H(+)</text>
        <dbReference type="Rhea" id="RHEA:28094"/>
        <dbReference type="ChEBI" id="CHEBI:15377"/>
        <dbReference type="ChEBI" id="CHEBI:15378"/>
        <dbReference type="ChEBI" id="CHEBI:43474"/>
        <dbReference type="ChEBI" id="CHEBI:58405"/>
        <dbReference type="ChEBI" id="CHEBI:60392"/>
        <dbReference type="EC" id="3.6.1.27"/>
    </reaction>
</comment>
<comment type="subcellular location">
    <subcellularLocation>
        <location evidence="1">Cell membrane</location>
        <topology evidence="1">Multi-pass membrane protein</topology>
    </subcellularLocation>
</comment>
<comment type="miscellaneous">
    <text>Bacitracin is thought to be involved in the inhibition of peptidoglycan synthesis by sequestering undecaprenyl diphosphate, thereby reducing the pool of lipid carrier available.</text>
</comment>
<comment type="similarity">
    <text evidence="1">Belongs to the UppP family.</text>
</comment>
<organism>
    <name type="scientific">Buchnera aphidicola subsp. Baizongia pistaciae (strain Bp)</name>
    <dbReference type="NCBI Taxonomy" id="224915"/>
    <lineage>
        <taxon>Bacteria</taxon>
        <taxon>Pseudomonadati</taxon>
        <taxon>Pseudomonadota</taxon>
        <taxon>Gammaproteobacteria</taxon>
        <taxon>Enterobacterales</taxon>
        <taxon>Erwiniaceae</taxon>
        <taxon>Buchnera</taxon>
    </lineage>
</organism>
<sequence length="268" mass="30326">MTMTTNIFNAIILGIVEGITEFFPISSSGHLLIFTNILEMKNNEIKILNTIIQTGAALSILLHFKEKFVIFLEQIFICKQITKKNDLIYHHIILGNIPIIFIGLCIYQYIKYLSNFYSIIYALIFGTILLILTEISKTKISSNKNIETPQILIIGIFQCLALWPGFSRSCATISAGILSGLKQSKSVEFSFILSVPIFFGASVLDVINNFYDISINNIPMLFSGFLSAFITSNIVIKRCLNTMKNCSLIPFIIYRSILSIIIYLFFMH</sequence>
<protein>
    <recommendedName>
        <fullName evidence="1">Undecaprenyl-diphosphatase</fullName>
        <ecNumber evidence="1">3.6.1.27</ecNumber>
    </recommendedName>
    <alternativeName>
        <fullName evidence="1">Bacitracin resistance protein</fullName>
    </alternativeName>
    <alternativeName>
        <fullName evidence="1">Undecaprenyl pyrophosphate phosphatase</fullName>
    </alternativeName>
</protein>